<dbReference type="EC" id="6.1.1.-"/>
<dbReference type="EMBL" id="AE000511">
    <property type="protein sequence ID" value="AAD07704.1"/>
    <property type="molecule type" value="Genomic_DNA"/>
</dbReference>
<dbReference type="PIR" id="C64600">
    <property type="entry name" value="C64600"/>
</dbReference>
<dbReference type="RefSeq" id="NP_207437.1">
    <property type="nucleotide sequence ID" value="NC_000915.1"/>
</dbReference>
<dbReference type="SMR" id="O25360"/>
<dbReference type="DIP" id="DIP-3622N"/>
<dbReference type="IntAct" id="O25360">
    <property type="interactions" value="2"/>
</dbReference>
<dbReference type="MINT" id="O25360"/>
<dbReference type="STRING" id="85962.HP_0643"/>
<dbReference type="PaxDb" id="85962-C694_03325"/>
<dbReference type="EnsemblBacteria" id="AAD07704">
    <property type="protein sequence ID" value="AAD07704"/>
    <property type="gene ID" value="HP_0643"/>
</dbReference>
<dbReference type="KEGG" id="hpy:HP_0643"/>
<dbReference type="PATRIC" id="fig|85962.8.peg.674"/>
<dbReference type="eggNOG" id="COG0008">
    <property type="taxonomic scope" value="Bacteria"/>
</dbReference>
<dbReference type="InParanoid" id="O25360"/>
<dbReference type="OrthoDB" id="9807503at2"/>
<dbReference type="PhylomeDB" id="O25360"/>
<dbReference type="BRENDA" id="6.1.1.24">
    <property type="organism ID" value="2604"/>
</dbReference>
<dbReference type="Proteomes" id="UP000000429">
    <property type="component" value="Chromosome"/>
</dbReference>
<dbReference type="GO" id="GO:0005829">
    <property type="term" value="C:cytosol"/>
    <property type="evidence" value="ECO:0000318"/>
    <property type="project" value="GO_Central"/>
</dbReference>
<dbReference type="GO" id="GO:0005524">
    <property type="term" value="F:ATP binding"/>
    <property type="evidence" value="ECO:0007669"/>
    <property type="project" value="UniProtKB-UniRule"/>
</dbReference>
<dbReference type="GO" id="GO:0004818">
    <property type="term" value="F:glutamate-tRNA ligase activity"/>
    <property type="evidence" value="ECO:0000318"/>
    <property type="project" value="GO_Central"/>
</dbReference>
<dbReference type="GO" id="GO:0000049">
    <property type="term" value="F:tRNA binding"/>
    <property type="evidence" value="ECO:0007669"/>
    <property type="project" value="InterPro"/>
</dbReference>
<dbReference type="GO" id="GO:0006424">
    <property type="term" value="P:glutamyl-tRNA aminoacylation"/>
    <property type="evidence" value="ECO:0000318"/>
    <property type="project" value="GO_Central"/>
</dbReference>
<dbReference type="FunFam" id="3.40.50.620:FF:000007">
    <property type="entry name" value="Glutamate--tRNA ligase"/>
    <property type="match status" value="1"/>
</dbReference>
<dbReference type="Gene3D" id="1.10.10.350">
    <property type="match status" value="1"/>
</dbReference>
<dbReference type="Gene3D" id="3.40.50.620">
    <property type="entry name" value="HUPs"/>
    <property type="match status" value="1"/>
</dbReference>
<dbReference type="HAMAP" id="MF_00022">
    <property type="entry name" value="Glu_tRNA_synth_type1"/>
    <property type="match status" value="1"/>
</dbReference>
<dbReference type="InterPro" id="IPR045462">
    <property type="entry name" value="aa-tRNA-synth_I_cd-bd"/>
</dbReference>
<dbReference type="InterPro" id="IPR020751">
    <property type="entry name" value="aa-tRNA-synth_I_codon-bd_sub2"/>
</dbReference>
<dbReference type="InterPro" id="IPR001412">
    <property type="entry name" value="aa-tRNA-synth_I_CS"/>
</dbReference>
<dbReference type="InterPro" id="IPR008925">
    <property type="entry name" value="aa_tRNA-synth_I_cd-bd_sf"/>
</dbReference>
<dbReference type="InterPro" id="IPR004527">
    <property type="entry name" value="Glu-tRNA-ligase_bac/mito"/>
</dbReference>
<dbReference type="InterPro" id="IPR000924">
    <property type="entry name" value="Glu/Gln-tRNA-synth"/>
</dbReference>
<dbReference type="InterPro" id="IPR020058">
    <property type="entry name" value="Glu/Gln-tRNA-synth_Ib_cat-dom"/>
</dbReference>
<dbReference type="InterPro" id="IPR049940">
    <property type="entry name" value="GluQ/Sye"/>
</dbReference>
<dbReference type="InterPro" id="IPR014729">
    <property type="entry name" value="Rossmann-like_a/b/a_fold"/>
</dbReference>
<dbReference type="NCBIfam" id="TIGR00464">
    <property type="entry name" value="gltX_bact"/>
    <property type="match status" value="1"/>
</dbReference>
<dbReference type="PANTHER" id="PTHR43311">
    <property type="entry name" value="GLUTAMATE--TRNA LIGASE"/>
    <property type="match status" value="1"/>
</dbReference>
<dbReference type="PANTHER" id="PTHR43311:SF2">
    <property type="entry name" value="GLUTAMATE--TRNA LIGASE, MITOCHONDRIAL-RELATED"/>
    <property type="match status" value="1"/>
</dbReference>
<dbReference type="Pfam" id="PF19269">
    <property type="entry name" value="Anticodon_2"/>
    <property type="match status" value="1"/>
</dbReference>
<dbReference type="Pfam" id="PF00749">
    <property type="entry name" value="tRNA-synt_1c"/>
    <property type="match status" value="1"/>
</dbReference>
<dbReference type="PRINTS" id="PR00987">
    <property type="entry name" value="TRNASYNTHGLU"/>
</dbReference>
<dbReference type="SUPFAM" id="SSF48163">
    <property type="entry name" value="An anticodon-binding domain of class I aminoacyl-tRNA synthetases"/>
    <property type="match status" value="1"/>
</dbReference>
<dbReference type="SUPFAM" id="SSF52374">
    <property type="entry name" value="Nucleotidylyl transferase"/>
    <property type="match status" value="1"/>
</dbReference>
<dbReference type="PROSITE" id="PS00178">
    <property type="entry name" value="AA_TRNA_LIGASE_I"/>
    <property type="match status" value="1"/>
</dbReference>
<name>SYE2_HELPY</name>
<feature type="chain" id="PRO_0000119577" description="GlutamylGlutaminyl-tRNA synthetase">
    <location>
        <begin position="1"/>
        <end position="439"/>
    </location>
</feature>
<feature type="short sequence motif" description="'HIGH' region">
    <location>
        <begin position="6"/>
        <end position="16"/>
    </location>
</feature>
<feature type="short sequence motif" description="'KMSKS' region">
    <location>
        <begin position="232"/>
        <end position="236"/>
    </location>
</feature>
<feature type="binding site" evidence="1">
    <location>
        <position position="235"/>
    </location>
    <ligand>
        <name>ATP</name>
        <dbReference type="ChEBI" id="CHEBI:30616"/>
    </ligand>
</feature>
<sequence>MLRFAPSPTGDMHIGNLRAAIFNYIVAKQQYKPFLIRIEDTDKERNIEGKDQEILEILKLMGISWDKLVYQSHNIDYHREMAEKLLKENKAFYCYASAEFLEREKEKAKNEKRPFRYSDEWATLEKDKHHAPVVRLKAPNHAVSFNDAIKKEVKFEPDELDSFVLLRQDKSPTYNFACACDDLLYKISLIIRGEDHVSNTPKQILIQQALGSNDPIVYAHLPIILDEVSGKKMSKRDEASSVKWLLNQGFLPVAIANYLITIGNKVPKEVFSLDEAIEWFSLENLSSSPAHFNLKYLKHLNHEHLKLLDDDKLLELTSIKDKNLLGLLRLFIEECGTLLELREKISLFLEPKDIVKTYENEDFKERCLALFNALTSMDFQAYKDFESFKKEAMRLSQLKGKDFFKPLRILLTGNSHGVELPLIFPYIQSHHQEVLRLKA</sequence>
<comment type="function">
    <text evidence="2 3">Aminoacylates tRNA(Gln) with glutamate. Does not aminoacylate tRNA(Glu).</text>
</comment>
<comment type="catalytic activity">
    <reaction>
        <text>tRNA(Glu) + L-glutamate + ATP = L-glutamyl-tRNA(Gln) + AMP + diphosphate</text>
        <dbReference type="Rhea" id="RHEA:51156"/>
        <dbReference type="Rhea" id="RHEA-COMP:9663"/>
        <dbReference type="Rhea" id="RHEA-COMP:9684"/>
        <dbReference type="ChEBI" id="CHEBI:29985"/>
        <dbReference type="ChEBI" id="CHEBI:30616"/>
        <dbReference type="ChEBI" id="CHEBI:33019"/>
        <dbReference type="ChEBI" id="CHEBI:78442"/>
        <dbReference type="ChEBI" id="CHEBI:78520"/>
        <dbReference type="ChEBI" id="CHEBI:456215"/>
    </reaction>
</comment>
<comment type="subunit">
    <text evidence="1">Monomer.</text>
</comment>
<comment type="subcellular location">
    <subcellularLocation>
        <location evidence="1">Cytoplasm</location>
    </subcellularLocation>
</comment>
<comment type="similarity">
    <text evidence="4">Belongs to the class-I aminoacyl-tRNA synthetase family. Glutamate--tRNA ligase type 1 subfamily.</text>
</comment>
<accession>O25360</accession>
<proteinExistence type="inferred from homology"/>
<evidence type="ECO:0000250" key="1"/>
<evidence type="ECO:0000269" key="2">
    <source>
    </source>
</evidence>
<evidence type="ECO:0000269" key="3">
    <source>
    </source>
</evidence>
<evidence type="ECO:0000305" key="4"/>
<reference key="1">
    <citation type="journal article" date="1997" name="Nature">
        <title>The complete genome sequence of the gastric pathogen Helicobacter pylori.</title>
        <authorList>
            <person name="Tomb J.-F."/>
            <person name="White O."/>
            <person name="Kerlavage A.R."/>
            <person name="Clayton R.A."/>
            <person name="Sutton G.G."/>
            <person name="Fleischmann R.D."/>
            <person name="Ketchum K.A."/>
            <person name="Klenk H.-P."/>
            <person name="Gill S.R."/>
            <person name="Dougherty B.A."/>
            <person name="Nelson K.E."/>
            <person name="Quackenbush J."/>
            <person name="Zhou L."/>
            <person name="Kirkness E.F."/>
            <person name="Peterson S.N."/>
            <person name="Loftus B.J."/>
            <person name="Richardson D.L."/>
            <person name="Dodson R.J."/>
            <person name="Khalak H.G."/>
            <person name="Glodek A."/>
            <person name="McKenney K."/>
            <person name="FitzGerald L.M."/>
            <person name="Lee N."/>
            <person name="Adams M.D."/>
            <person name="Hickey E.K."/>
            <person name="Berg D.E."/>
            <person name="Gocayne J.D."/>
            <person name="Utterback T.R."/>
            <person name="Peterson J.D."/>
            <person name="Kelley J.M."/>
            <person name="Cotton M.D."/>
            <person name="Weidman J.F."/>
            <person name="Fujii C."/>
            <person name="Bowman C."/>
            <person name="Watthey L."/>
            <person name="Wallin E."/>
            <person name="Hayes W.S."/>
            <person name="Borodovsky M."/>
            <person name="Karp P.D."/>
            <person name="Smith H.O."/>
            <person name="Fraser C.M."/>
            <person name="Venter J.C."/>
        </authorList>
    </citation>
    <scope>NUCLEOTIDE SEQUENCE [LARGE SCALE GENOMIC DNA]</scope>
    <source>
        <strain>ATCC 700392 / 26695</strain>
    </source>
</reference>
<reference key="2">
    <citation type="journal article" date="2003" name="Proc. Natl. Acad. Sci. U.S.A.">
        <title>A noncognate aminoacyl-tRNA synthetase that may resolve a missing link in protein evolution.</title>
        <authorList>
            <person name="Skouloubris S."/>
            <person name="Ribas de Pouplana L."/>
            <person name="de Reuse H."/>
            <person name="Hendrickson T.L."/>
        </authorList>
    </citation>
    <scope>FUNCTION</scope>
    <source>
        <strain>ATCC 700392 / 26695</strain>
    </source>
</reference>
<reference key="3">
    <citation type="journal article" date="2003" name="Proc. Natl. Acad. Sci. U.S.A.">
        <title>Coevolution of an aminoacyl-tRNA synthetase with its tRNA substrates.</title>
        <authorList>
            <person name="Salazar J.C."/>
            <person name="Ahel I."/>
            <person name="Orellana O."/>
            <person name="Tumbula-Hansen D."/>
            <person name="Krieger R."/>
            <person name="Daniels L."/>
            <person name="Soell D."/>
        </authorList>
    </citation>
    <scope>FUNCTION</scope>
    <source>
        <strain>ATCC 700392 / 26695</strain>
    </source>
</reference>
<protein>
    <recommendedName>
        <fullName>GlutamylGlutaminyl-tRNA synthetase</fullName>
        <shortName>GluGlnRS</shortName>
        <ecNumber>6.1.1.-</ecNumber>
    </recommendedName>
    <alternativeName>
        <fullName>Glutamate--tRNA ligase 2</fullName>
        <shortName>GluRS 2</shortName>
    </alternativeName>
    <alternativeName>
        <fullName>Glutamyl-tRNA synthetase 2</fullName>
    </alternativeName>
</protein>
<keyword id="KW-0030">Aminoacyl-tRNA synthetase</keyword>
<keyword id="KW-0067">ATP-binding</keyword>
<keyword id="KW-0963">Cytoplasm</keyword>
<keyword id="KW-0436">Ligase</keyword>
<keyword id="KW-0547">Nucleotide-binding</keyword>
<keyword id="KW-0648">Protein biosynthesis</keyword>
<keyword id="KW-1185">Reference proteome</keyword>
<organism>
    <name type="scientific">Helicobacter pylori (strain ATCC 700392 / 26695)</name>
    <name type="common">Campylobacter pylori</name>
    <dbReference type="NCBI Taxonomy" id="85962"/>
    <lineage>
        <taxon>Bacteria</taxon>
        <taxon>Pseudomonadati</taxon>
        <taxon>Campylobacterota</taxon>
        <taxon>Epsilonproteobacteria</taxon>
        <taxon>Campylobacterales</taxon>
        <taxon>Helicobacteraceae</taxon>
        <taxon>Helicobacter</taxon>
    </lineage>
</organism>
<gene>
    <name type="primary">gltX2</name>
    <name type="ordered locus">HP_0643</name>
</gene>